<keyword id="KW-0067">ATP-binding</keyword>
<keyword id="KW-0963">Cytoplasm</keyword>
<keyword id="KW-0418">Kinase</keyword>
<keyword id="KW-0545">Nucleotide biosynthesis</keyword>
<keyword id="KW-0547">Nucleotide-binding</keyword>
<keyword id="KW-0808">Transferase</keyword>
<name>KAD_JANMA</name>
<organism>
    <name type="scientific">Janthinobacterium sp. (strain Marseille)</name>
    <name type="common">Minibacterium massiliensis</name>
    <dbReference type="NCBI Taxonomy" id="375286"/>
    <lineage>
        <taxon>Bacteria</taxon>
        <taxon>Pseudomonadati</taxon>
        <taxon>Pseudomonadota</taxon>
        <taxon>Betaproteobacteria</taxon>
        <taxon>Burkholderiales</taxon>
        <taxon>Oxalobacteraceae</taxon>
        <taxon>Janthinobacterium</taxon>
    </lineage>
</organism>
<evidence type="ECO:0000255" key="1">
    <source>
        <dbReference type="HAMAP-Rule" id="MF_00235"/>
    </source>
</evidence>
<feature type="chain" id="PRO_1000058843" description="Adenylate kinase">
    <location>
        <begin position="1"/>
        <end position="218"/>
    </location>
</feature>
<feature type="region of interest" description="NMP" evidence="1">
    <location>
        <begin position="30"/>
        <end position="59"/>
    </location>
</feature>
<feature type="region of interest" description="LID" evidence="1">
    <location>
        <begin position="122"/>
        <end position="159"/>
    </location>
</feature>
<feature type="binding site" evidence="1">
    <location>
        <begin position="10"/>
        <end position="15"/>
    </location>
    <ligand>
        <name>ATP</name>
        <dbReference type="ChEBI" id="CHEBI:30616"/>
    </ligand>
</feature>
<feature type="binding site" evidence="1">
    <location>
        <position position="31"/>
    </location>
    <ligand>
        <name>AMP</name>
        <dbReference type="ChEBI" id="CHEBI:456215"/>
    </ligand>
</feature>
<feature type="binding site" evidence="1">
    <location>
        <position position="36"/>
    </location>
    <ligand>
        <name>AMP</name>
        <dbReference type="ChEBI" id="CHEBI:456215"/>
    </ligand>
</feature>
<feature type="binding site" evidence="1">
    <location>
        <begin position="57"/>
        <end position="59"/>
    </location>
    <ligand>
        <name>AMP</name>
        <dbReference type="ChEBI" id="CHEBI:456215"/>
    </ligand>
</feature>
<feature type="binding site" evidence="1">
    <location>
        <begin position="85"/>
        <end position="88"/>
    </location>
    <ligand>
        <name>AMP</name>
        <dbReference type="ChEBI" id="CHEBI:456215"/>
    </ligand>
</feature>
<feature type="binding site" evidence="1">
    <location>
        <position position="92"/>
    </location>
    <ligand>
        <name>AMP</name>
        <dbReference type="ChEBI" id="CHEBI:456215"/>
    </ligand>
</feature>
<feature type="binding site" evidence="1">
    <location>
        <position position="123"/>
    </location>
    <ligand>
        <name>ATP</name>
        <dbReference type="ChEBI" id="CHEBI:30616"/>
    </ligand>
</feature>
<feature type="binding site" evidence="1">
    <location>
        <begin position="132"/>
        <end position="133"/>
    </location>
    <ligand>
        <name>ATP</name>
        <dbReference type="ChEBI" id="CHEBI:30616"/>
    </ligand>
</feature>
<feature type="binding site" evidence="1">
    <location>
        <position position="156"/>
    </location>
    <ligand>
        <name>AMP</name>
        <dbReference type="ChEBI" id="CHEBI:456215"/>
    </ligand>
</feature>
<feature type="binding site" evidence="1">
    <location>
        <position position="167"/>
    </location>
    <ligand>
        <name>AMP</name>
        <dbReference type="ChEBI" id="CHEBI:456215"/>
    </ligand>
</feature>
<feature type="binding site" evidence="1">
    <location>
        <position position="203"/>
    </location>
    <ligand>
        <name>ATP</name>
        <dbReference type="ChEBI" id="CHEBI:30616"/>
    </ligand>
</feature>
<gene>
    <name evidence="1" type="primary">adk</name>
    <name type="ordered locus">mma_2576</name>
</gene>
<accession>A6T169</accession>
<sequence>MRLILLGAPGAGKGTQAGFIKDKFNIPQISTGDMLRAAVKAGTPLGIAAKKIMDEGGLVSDDIIIGLVKDRLKEADCAKGYLFDGFPRTIPQADAMKEAGVAIDYVLEIDVPDEAIVERMSGRRVHPASGRTYHVKFNPPKVAGKDDLTGEELIQRDDDKEETVKKRLSVYHEQTEVLVGYYNQWAASGQPGAPKYRKIAGVGPVDQIRDSAFAALAG</sequence>
<reference key="1">
    <citation type="journal article" date="2007" name="PLoS Genet.">
        <title>Genome analysis of Minibacterium massiliensis highlights the convergent evolution of water-living bacteria.</title>
        <authorList>
            <person name="Audic S."/>
            <person name="Robert C."/>
            <person name="Campagna B."/>
            <person name="Parinello H."/>
            <person name="Claverie J.-M."/>
            <person name="Raoult D."/>
            <person name="Drancourt M."/>
        </authorList>
    </citation>
    <scope>NUCLEOTIDE SEQUENCE [LARGE SCALE GENOMIC DNA]</scope>
    <source>
        <strain>Marseille</strain>
    </source>
</reference>
<protein>
    <recommendedName>
        <fullName evidence="1">Adenylate kinase</fullName>
        <shortName evidence="1">AK</shortName>
        <ecNumber evidence="1">2.7.4.3</ecNumber>
    </recommendedName>
    <alternativeName>
        <fullName evidence="1">ATP-AMP transphosphorylase</fullName>
    </alternativeName>
    <alternativeName>
        <fullName evidence="1">ATP:AMP phosphotransferase</fullName>
    </alternativeName>
    <alternativeName>
        <fullName evidence="1">Adenylate monophosphate kinase</fullName>
    </alternativeName>
</protein>
<comment type="function">
    <text evidence="1">Catalyzes the reversible transfer of the terminal phosphate group between ATP and AMP. Plays an important role in cellular energy homeostasis and in adenine nucleotide metabolism.</text>
</comment>
<comment type="catalytic activity">
    <reaction evidence="1">
        <text>AMP + ATP = 2 ADP</text>
        <dbReference type="Rhea" id="RHEA:12973"/>
        <dbReference type="ChEBI" id="CHEBI:30616"/>
        <dbReference type="ChEBI" id="CHEBI:456215"/>
        <dbReference type="ChEBI" id="CHEBI:456216"/>
        <dbReference type="EC" id="2.7.4.3"/>
    </reaction>
</comment>
<comment type="pathway">
    <text evidence="1">Purine metabolism; AMP biosynthesis via salvage pathway; AMP from ADP: step 1/1.</text>
</comment>
<comment type="subunit">
    <text evidence="1">Monomer.</text>
</comment>
<comment type="subcellular location">
    <subcellularLocation>
        <location evidence="1">Cytoplasm</location>
    </subcellularLocation>
</comment>
<comment type="domain">
    <text evidence="1">Consists of three domains, a large central CORE domain and two small peripheral domains, NMPbind and LID, which undergo movements during catalysis. The LID domain closes over the site of phosphoryl transfer upon ATP binding. Assembling and dissambling the active center during each catalytic cycle provides an effective means to prevent ATP hydrolysis.</text>
</comment>
<comment type="similarity">
    <text evidence="1">Belongs to the adenylate kinase family.</text>
</comment>
<proteinExistence type="inferred from homology"/>
<dbReference type="EC" id="2.7.4.3" evidence="1"/>
<dbReference type="EMBL" id="CP000269">
    <property type="protein sequence ID" value="ABR89185.1"/>
    <property type="molecule type" value="Genomic_DNA"/>
</dbReference>
<dbReference type="RefSeq" id="WP_012080428.1">
    <property type="nucleotide sequence ID" value="NC_009659.1"/>
</dbReference>
<dbReference type="SMR" id="A6T169"/>
<dbReference type="STRING" id="375286.mma_2576"/>
<dbReference type="KEGG" id="mms:mma_2576"/>
<dbReference type="eggNOG" id="COG0563">
    <property type="taxonomic scope" value="Bacteria"/>
</dbReference>
<dbReference type="HOGENOM" id="CLU_032354_1_2_4"/>
<dbReference type="OrthoDB" id="9805030at2"/>
<dbReference type="UniPathway" id="UPA00588">
    <property type="reaction ID" value="UER00649"/>
</dbReference>
<dbReference type="Proteomes" id="UP000006388">
    <property type="component" value="Chromosome"/>
</dbReference>
<dbReference type="GO" id="GO:0005737">
    <property type="term" value="C:cytoplasm"/>
    <property type="evidence" value="ECO:0007669"/>
    <property type="project" value="UniProtKB-SubCell"/>
</dbReference>
<dbReference type="GO" id="GO:0004017">
    <property type="term" value="F:adenylate kinase activity"/>
    <property type="evidence" value="ECO:0007669"/>
    <property type="project" value="UniProtKB-UniRule"/>
</dbReference>
<dbReference type="GO" id="GO:0005524">
    <property type="term" value="F:ATP binding"/>
    <property type="evidence" value="ECO:0007669"/>
    <property type="project" value="UniProtKB-UniRule"/>
</dbReference>
<dbReference type="GO" id="GO:0044209">
    <property type="term" value="P:AMP salvage"/>
    <property type="evidence" value="ECO:0007669"/>
    <property type="project" value="UniProtKB-UniRule"/>
</dbReference>
<dbReference type="CDD" id="cd01428">
    <property type="entry name" value="ADK"/>
    <property type="match status" value="1"/>
</dbReference>
<dbReference type="FunFam" id="3.40.50.300:FF:000106">
    <property type="entry name" value="Adenylate kinase mitochondrial"/>
    <property type="match status" value="1"/>
</dbReference>
<dbReference type="Gene3D" id="3.40.50.300">
    <property type="entry name" value="P-loop containing nucleotide triphosphate hydrolases"/>
    <property type="match status" value="1"/>
</dbReference>
<dbReference type="HAMAP" id="MF_00235">
    <property type="entry name" value="Adenylate_kinase_Adk"/>
    <property type="match status" value="1"/>
</dbReference>
<dbReference type="InterPro" id="IPR006259">
    <property type="entry name" value="Adenyl_kin_sub"/>
</dbReference>
<dbReference type="InterPro" id="IPR000850">
    <property type="entry name" value="Adenylat/UMP-CMP_kin"/>
</dbReference>
<dbReference type="InterPro" id="IPR033690">
    <property type="entry name" value="Adenylat_kinase_CS"/>
</dbReference>
<dbReference type="InterPro" id="IPR007862">
    <property type="entry name" value="Adenylate_kinase_lid-dom"/>
</dbReference>
<dbReference type="InterPro" id="IPR027417">
    <property type="entry name" value="P-loop_NTPase"/>
</dbReference>
<dbReference type="NCBIfam" id="TIGR01351">
    <property type="entry name" value="adk"/>
    <property type="match status" value="1"/>
</dbReference>
<dbReference type="NCBIfam" id="NF001379">
    <property type="entry name" value="PRK00279.1-1"/>
    <property type="match status" value="1"/>
</dbReference>
<dbReference type="NCBIfam" id="NF001380">
    <property type="entry name" value="PRK00279.1-2"/>
    <property type="match status" value="1"/>
</dbReference>
<dbReference type="NCBIfam" id="NF001381">
    <property type="entry name" value="PRK00279.1-3"/>
    <property type="match status" value="1"/>
</dbReference>
<dbReference type="PANTHER" id="PTHR23359">
    <property type="entry name" value="NUCLEOTIDE KINASE"/>
    <property type="match status" value="1"/>
</dbReference>
<dbReference type="Pfam" id="PF00406">
    <property type="entry name" value="ADK"/>
    <property type="match status" value="1"/>
</dbReference>
<dbReference type="Pfam" id="PF05191">
    <property type="entry name" value="ADK_lid"/>
    <property type="match status" value="1"/>
</dbReference>
<dbReference type="PRINTS" id="PR00094">
    <property type="entry name" value="ADENYLTKNASE"/>
</dbReference>
<dbReference type="SUPFAM" id="SSF52540">
    <property type="entry name" value="P-loop containing nucleoside triphosphate hydrolases"/>
    <property type="match status" value="1"/>
</dbReference>
<dbReference type="PROSITE" id="PS00113">
    <property type="entry name" value="ADENYLATE_KINASE"/>
    <property type="match status" value="1"/>
</dbReference>